<name>CA14_CONLE</name>
<feature type="signal peptide" evidence="2">
    <location>
        <begin position="1"/>
        <end position="21"/>
    </location>
</feature>
<feature type="propeptide" id="PRO_0000370650" evidence="6">
    <location>
        <begin position="22"/>
        <end position="48"/>
    </location>
</feature>
<feature type="peptide" id="PRO_0000370651" description="Alpha-conotoxin Lp1.4" evidence="6">
    <location>
        <begin position="49"/>
        <end position="65"/>
    </location>
</feature>
<feature type="region of interest" description="Ser-Xaa-Pro motif, crucial for potent interaction with nAChR" evidence="1">
    <location>
        <begin position="52"/>
        <end position="54"/>
    </location>
</feature>
<feature type="modified residue" description="Aspartic acid 1-amide" evidence="6">
    <location>
        <position position="65"/>
    </location>
</feature>
<feature type="disulfide bond" evidence="7">
    <location>
        <begin position="50"/>
        <end position="56"/>
    </location>
</feature>
<feature type="disulfide bond" evidence="7">
    <location>
        <begin position="51"/>
        <end position="64"/>
    </location>
</feature>
<feature type="sequence conflict" description="In Ref. 1; AAS93427." evidence="5" ref="1">
    <original>S</original>
    <variation>F</variation>
    <location>
        <position position="7"/>
    </location>
</feature>
<protein>
    <recommendedName>
        <fullName evidence="4">Alpha-conotoxin Lp1.4</fullName>
    </recommendedName>
</protein>
<accession>A1X8B6</accession>
<accession>Q6PTD2</accession>
<dbReference type="EMBL" id="DQ311056">
    <property type="protein sequence ID" value="ABD33848.1"/>
    <property type="molecule type" value="Genomic_DNA"/>
</dbReference>
<dbReference type="EMBL" id="AY580324">
    <property type="protein sequence ID" value="AAS93427.1"/>
    <property type="molecule type" value="mRNA"/>
</dbReference>
<dbReference type="SMR" id="A1X8B6"/>
<dbReference type="ConoServer" id="122">
    <property type="toxin name" value="Lp1.4 precursor"/>
</dbReference>
<dbReference type="ConoServer" id="546">
    <property type="toxin name" value="Lp1.4 precursor"/>
</dbReference>
<dbReference type="GO" id="GO:0005576">
    <property type="term" value="C:extracellular region"/>
    <property type="evidence" value="ECO:0007669"/>
    <property type="project" value="UniProtKB-SubCell"/>
</dbReference>
<dbReference type="GO" id="GO:0035792">
    <property type="term" value="C:host cell postsynaptic membrane"/>
    <property type="evidence" value="ECO:0007669"/>
    <property type="project" value="UniProtKB-KW"/>
</dbReference>
<dbReference type="GO" id="GO:0030550">
    <property type="term" value="F:acetylcholine receptor inhibitor activity"/>
    <property type="evidence" value="ECO:0007669"/>
    <property type="project" value="UniProtKB-KW"/>
</dbReference>
<dbReference type="GO" id="GO:0099106">
    <property type="term" value="F:ion channel regulator activity"/>
    <property type="evidence" value="ECO:0007669"/>
    <property type="project" value="UniProtKB-KW"/>
</dbReference>
<dbReference type="GO" id="GO:0090729">
    <property type="term" value="F:toxin activity"/>
    <property type="evidence" value="ECO:0007669"/>
    <property type="project" value="UniProtKB-KW"/>
</dbReference>
<dbReference type="InterPro" id="IPR009958">
    <property type="entry name" value="Conotoxin_a-typ"/>
</dbReference>
<dbReference type="Pfam" id="PF07365">
    <property type="entry name" value="Toxin_8"/>
    <property type="match status" value="1"/>
</dbReference>
<reference key="1">
    <citation type="journal article" date="2007" name="Toxicon">
        <title>From the identification of gene organization of alpha conotoxins to the cloning of novel toxins.</title>
        <authorList>
            <person name="Yuan D.-D."/>
            <person name="Han Y.-H."/>
            <person name="Wang C.-G."/>
            <person name="Chi C.-W."/>
        </authorList>
    </citation>
    <scope>NUCLEOTIDE SEQUENCE [GENOMIC DNA / MRNA]</scope>
    <scope>AMIDATION AT ASP-65</scope>
</reference>
<reference key="2">
    <citation type="journal article" date="2010" name="Acta Biochim. Biophys. Sin.">
        <title>Chemical synthesis and characterization of two alpha4/7-conotoxins.</title>
        <authorList>
            <person name="Peng C."/>
            <person name="Chen W."/>
            <person name="Sanders T."/>
            <person name="Chew G."/>
            <person name="Liu J."/>
            <person name="Hawrot E."/>
            <person name="Chi C."/>
        </authorList>
    </citation>
    <scope>FUNCTION</scope>
    <scope>SYNTHESIS OF 49-65</scope>
</reference>
<comment type="function">
    <text evidence="3">Alpha-conotoxins act on postsynaptic membranes, they bind to the nicotinic acetylcholine receptors (nAChR) and thus inhibit them. This toxin inhibits mouse muscle alpha-1-beta-1-gamma-delta (CHRNA1-CHRNB1-CHRNG-CHRND), and weakly rat neuronal alpha-6/alpha-3-beta-2 (CHRNA6/CHRNA3-CHRNB2).</text>
</comment>
<comment type="subcellular location">
    <subcellularLocation>
        <location evidence="6">Secreted</location>
    </subcellularLocation>
</comment>
<comment type="tissue specificity">
    <text evidence="6">Expressed by the venom duct.</text>
</comment>
<comment type="domain">
    <text evidence="5">The cysteine framework is I (CC-C-C). Alpha4/7 pattern.</text>
</comment>
<comment type="miscellaneous">
    <text evidence="3">Negative results: does not or only weakly inhibits rat neuronal alpha-7/CHRNA7, alpha-3-beta-2/CHRNA3-CHRNB2, alpha-6/alpha-3-beta-4 (CHRNA6/CHRNA3-CHRNB4), alpha-3-beta-4/CHRNA3-CHRNB4, alpha-4-beta-4/CHRNA4-CHRNB4 and alpha-4-beta-2/CHRNA4-CHRNB2 nAChR.</text>
</comment>
<comment type="similarity">
    <text evidence="5">Belongs to the conotoxin A superfamily.</text>
</comment>
<keyword id="KW-0008">Acetylcholine receptor inhibiting toxin</keyword>
<keyword id="KW-0027">Amidation</keyword>
<keyword id="KW-1015">Disulfide bond</keyword>
<keyword id="KW-0872">Ion channel impairing toxin</keyword>
<keyword id="KW-0528">Neurotoxin</keyword>
<keyword id="KW-0629">Postsynaptic neurotoxin</keyword>
<keyword id="KW-0964">Secreted</keyword>
<keyword id="KW-0732">Signal</keyword>
<keyword id="KW-0800">Toxin</keyword>
<proteinExistence type="evidence at protein level"/>
<evidence type="ECO:0000250" key="1">
    <source>
        <dbReference type="UniProtKB" id="P56636"/>
    </source>
</evidence>
<evidence type="ECO:0000255" key="2"/>
<evidence type="ECO:0000269" key="3">
    <source>
    </source>
</evidence>
<evidence type="ECO:0000303" key="4">
    <source>
    </source>
</evidence>
<evidence type="ECO:0000305" key="5"/>
<evidence type="ECO:0000305" key="6">
    <source>
    </source>
</evidence>
<evidence type="ECO:0000305" key="7">
    <source>
    </source>
</evidence>
<sequence length="68" mass="7292">MGMRMMSIMFMLVVLATTVVSFTSDRALDAMNAAASKKASRLIALAVRGCCSHPACSGNHQELCDGRR</sequence>
<organism>
    <name type="scientific">Conus leopardus</name>
    <name type="common">Leopard cone</name>
    <dbReference type="NCBI Taxonomy" id="101306"/>
    <lineage>
        <taxon>Eukaryota</taxon>
        <taxon>Metazoa</taxon>
        <taxon>Spiralia</taxon>
        <taxon>Lophotrochozoa</taxon>
        <taxon>Mollusca</taxon>
        <taxon>Gastropoda</taxon>
        <taxon>Caenogastropoda</taxon>
        <taxon>Neogastropoda</taxon>
        <taxon>Conoidea</taxon>
        <taxon>Conidae</taxon>
        <taxon>Conus</taxon>
        <taxon>Lithoconus</taxon>
    </lineage>
</organism>